<gene>
    <name type="primary">SPT16</name>
    <name type="ORF">FGRRES_10040</name>
    <name type="ORF">FGSG_10040</name>
</gene>
<proteinExistence type="inferred from homology"/>
<dbReference type="EMBL" id="DS231669">
    <property type="protein sequence ID" value="ESU16705.1"/>
    <property type="molecule type" value="Genomic_DNA"/>
</dbReference>
<dbReference type="EMBL" id="HG970332">
    <property type="protein sequence ID" value="CEF75374.1"/>
    <property type="molecule type" value="Genomic_DNA"/>
</dbReference>
<dbReference type="RefSeq" id="XP_011318967.1">
    <property type="nucleotide sequence ID" value="XM_011320665.1"/>
</dbReference>
<dbReference type="SMR" id="Q4HYB8"/>
<dbReference type="FunCoup" id="Q4HYB8">
    <property type="interactions" value="1326"/>
</dbReference>
<dbReference type="STRING" id="229533.Q4HYB8"/>
<dbReference type="GeneID" id="23556963"/>
<dbReference type="KEGG" id="fgr:FGSG_10040"/>
<dbReference type="VEuPathDB" id="FungiDB:FGRAMPH1_01G07139"/>
<dbReference type="eggNOG" id="KOG1189">
    <property type="taxonomic scope" value="Eukaryota"/>
</dbReference>
<dbReference type="HOGENOM" id="CLU_004627_1_0_1"/>
<dbReference type="InParanoid" id="Q4HYB8"/>
<dbReference type="OrthoDB" id="97936at110618"/>
<dbReference type="Proteomes" id="UP000070720">
    <property type="component" value="Chromosome 1"/>
</dbReference>
<dbReference type="GO" id="GO:0035101">
    <property type="term" value="C:FACT complex"/>
    <property type="evidence" value="ECO:0007669"/>
    <property type="project" value="InterPro"/>
</dbReference>
<dbReference type="GO" id="GO:0031491">
    <property type="term" value="F:nucleosome binding"/>
    <property type="evidence" value="ECO:0007669"/>
    <property type="project" value="TreeGrafter"/>
</dbReference>
<dbReference type="GO" id="GO:0006281">
    <property type="term" value="P:DNA repair"/>
    <property type="evidence" value="ECO:0007669"/>
    <property type="project" value="UniProtKB-KW"/>
</dbReference>
<dbReference type="GO" id="GO:0006260">
    <property type="term" value="P:DNA replication"/>
    <property type="evidence" value="ECO:0007669"/>
    <property type="project" value="UniProtKB-KW"/>
</dbReference>
<dbReference type="GO" id="GO:0006368">
    <property type="term" value="P:transcription elongation by RNA polymerase II"/>
    <property type="evidence" value="ECO:0007669"/>
    <property type="project" value="TreeGrafter"/>
</dbReference>
<dbReference type="CDD" id="cd01091">
    <property type="entry name" value="CDC68-like"/>
    <property type="match status" value="1"/>
</dbReference>
<dbReference type="FunFam" id="2.30.29.150:FF:000002">
    <property type="entry name" value="FACT complex subunit SPT16"/>
    <property type="match status" value="1"/>
</dbReference>
<dbReference type="FunFam" id="2.30.29.30:FF:000017">
    <property type="entry name" value="FACT complex subunit SPT16"/>
    <property type="match status" value="1"/>
</dbReference>
<dbReference type="FunFam" id="3.40.350.10:FF:000006">
    <property type="entry name" value="FACT complex subunit SPT16"/>
    <property type="match status" value="1"/>
</dbReference>
<dbReference type="FunFam" id="2.30.29.210:FF:000001">
    <property type="entry name" value="FACT complex subunit spt16"/>
    <property type="match status" value="1"/>
</dbReference>
<dbReference type="FunFam" id="3.90.230.10:FF:000005">
    <property type="entry name" value="FACT complex subunit spt16"/>
    <property type="match status" value="1"/>
</dbReference>
<dbReference type="Gene3D" id="2.30.29.150">
    <property type="match status" value="1"/>
</dbReference>
<dbReference type="Gene3D" id="3.90.230.10">
    <property type="entry name" value="Creatinase/methionine aminopeptidase superfamily"/>
    <property type="match status" value="1"/>
</dbReference>
<dbReference type="Gene3D" id="3.40.350.10">
    <property type="entry name" value="Creatinase/prolidase N-terminal domain"/>
    <property type="match status" value="1"/>
</dbReference>
<dbReference type="Gene3D" id="2.30.29.210">
    <property type="entry name" value="FACT complex subunit Spt16p/Cdc68p"/>
    <property type="match status" value="1"/>
</dbReference>
<dbReference type="Gene3D" id="2.30.29.30">
    <property type="entry name" value="Pleckstrin-homology domain (PH domain)/Phosphotyrosine-binding domain (PTB)"/>
    <property type="match status" value="1"/>
</dbReference>
<dbReference type="InterPro" id="IPR029149">
    <property type="entry name" value="Creatin/AminoP/Spt16_N"/>
</dbReference>
<dbReference type="InterPro" id="IPR036005">
    <property type="entry name" value="Creatinase/aminopeptidase-like"/>
</dbReference>
<dbReference type="InterPro" id="IPR029148">
    <property type="entry name" value="FACT-SPT16_Nlobe"/>
</dbReference>
<dbReference type="InterPro" id="IPR056595">
    <property type="entry name" value="Fact-SPT16_PH"/>
</dbReference>
<dbReference type="InterPro" id="IPR048969">
    <property type="entry name" value="FACT_SPT16_C"/>
</dbReference>
<dbReference type="InterPro" id="IPR013953">
    <property type="entry name" value="FACT_SPT16_M"/>
</dbReference>
<dbReference type="InterPro" id="IPR000994">
    <property type="entry name" value="Pept_M24"/>
</dbReference>
<dbReference type="InterPro" id="IPR011993">
    <property type="entry name" value="PH-like_dom_sf"/>
</dbReference>
<dbReference type="InterPro" id="IPR013719">
    <property type="entry name" value="RTT106/SPT16-like_middle_dom"/>
</dbReference>
<dbReference type="InterPro" id="IPR040258">
    <property type="entry name" value="Spt16"/>
</dbReference>
<dbReference type="InterPro" id="IPR033825">
    <property type="entry name" value="Spt16_M24"/>
</dbReference>
<dbReference type="PANTHER" id="PTHR13980">
    <property type="entry name" value="CDC68 RELATED"/>
    <property type="match status" value="1"/>
</dbReference>
<dbReference type="PANTHER" id="PTHR13980:SF15">
    <property type="entry name" value="FACT COMPLEX SUBUNIT SPT16"/>
    <property type="match status" value="1"/>
</dbReference>
<dbReference type="Pfam" id="PF14826">
    <property type="entry name" value="FACT-Spt16_Nlob"/>
    <property type="match status" value="1"/>
</dbReference>
<dbReference type="Pfam" id="PF00557">
    <property type="entry name" value="Peptidase_M24"/>
    <property type="match status" value="1"/>
</dbReference>
<dbReference type="Pfam" id="PF24824">
    <property type="entry name" value="PH_SPT16"/>
    <property type="match status" value="1"/>
</dbReference>
<dbReference type="Pfam" id="PF08512">
    <property type="entry name" value="Rttp106-like_middle"/>
    <property type="match status" value="1"/>
</dbReference>
<dbReference type="Pfam" id="PF08644">
    <property type="entry name" value="SPT16"/>
    <property type="match status" value="1"/>
</dbReference>
<dbReference type="Pfam" id="PF21091">
    <property type="entry name" value="SPT16_C"/>
    <property type="match status" value="1"/>
</dbReference>
<dbReference type="SMART" id="SM01285">
    <property type="entry name" value="FACT-Spt16_Nlob"/>
    <property type="match status" value="1"/>
</dbReference>
<dbReference type="SMART" id="SM01287">
    <property type="entry name" value="Rtt106"/>
    <property type="match status" value="1"/>
</dbReference>
<dbReference type="SMART" id="SM01286">
    <property type="entry name" value="SPT16"/>
    <property type="match status" value="1"/>
</dbReference>
<dbReference type="SUPFAM" id="SSF55920">
    <property type="entry name" value="Creatinase/aminopeptidase"/>
    <property type="match status" value="1"/>
</dbReference>
<feature type="chain" id="PRO_0000245186" description="FACT complex subunit SPT16">
    <location>
        <begin position="1"/>
        <end position="1034"/>
    </location>
</feature>
<feature type="region of interest" description="Disordered" evidence="3">
    <location>
        <begin position="444"/>
        <end position="464"/>
    </location>
</feature>
<feature type="region of interest" description="Disordered" evidence="3">
    <location>
        <begin position="502"/>
        <end position="521"/>
    </location>
</feature>
<feature type="region of interest" description="Disordered" evidence="3">
    <location>
        <begin position="942"/>
        <end position="1034"/>
    </location>
</feature>
<feature type="coiled-coil region" evidence="2">
    <location>
        <begin position="480"/>
        <end position="507"/>
    </location>
</feature>
<feature type="coiled-coil region" evidence="2">
    <location>
        <begin position="625"/>
        <end position="659"/>
    </location>
</feature>
<feature type="compositionally biased region" description="Basic and acidic residues" evidence="3">
    <location>
        <begin position="452"/>
        <end position="462"/>
    </location>
</feature>
<feature type="compositionally biased region" description="Acidic residues" evidence="3">
    <location>
        <begin position="945"/>
        <end position="978"/>
    </location>
</feature>
<feature type="compositionally biased region" description="Acidic residues" evidence="3">
    <location>
        <begin position="985"/>
        <end position="1005"/>
    </location>
</feature>
<comment type="function">
    <text evidence="1">Component of the FACT complex, a general chromatin factor that acts to reorganize nucleosomes. The FACT complex is involved in multiple processes that require DNA as a template such as mRNA elongation, DNA replication and DNA repair. During transcription elongation the FACT complex acts as a histone chaperone that both destabilizes and restores nucleosomal structure. It facilitates the passage of RNA polymerase II and transcription by promoting the dissociation of one histone H2A-H2B dimer from the nucleosome, then subsequently promotes the reestablishment of the nucleosome following the passage of RNA polymerase II (By similarity).</text>
</comment>
<comment type="subunit">
    <text evidence="1">Forms a stable heterodimer with POB3. The SPT16-POB3 dimer weakly associates with multiple molecules of NHP6 to form the FACT complex (By similarity).</text>
</comment>
<comment type="subcellular location">
    <subcellularLocation>
        <location evidence="1">Nucleus</location>
    </subcellularLocation>
    <subcellularLocation>
        <location evidence="1">Chromosome</location>
    </subcellularLocation>
</comment>
<comment type="similarity">
    <text evidence="4">Belongs to the peptidase M24 family. SPT16 subfamily.</text>
</comment>
<comment type="caution">
    <text evidence="4">Although related to the peptidase M24 family, this protein lacks conserved active site residues suggesting that it may lack peptidase activity.</text>
</comment>
<name>SPT16_GIBZE</name>
<sequence>MAEIKIDSKIFQERISHFATAWKNDLRSKDGLFNGAQSLVVMMGKVEEVPEFHKNNAIHFWLLGYEFPTTLMLFTLDTLYILTTAKKAKHLEQLKGGRFPIEVLVRGKDAAENEKLFVKLTDKIKEAGNKVGTIAKDTSRGPFVDEWKKVLAEHCKEVSQVDISAALSTYAFAVKDESELRAMRTASKACVALMTPYFLDEMSNILDAEKKVKHSTLADKVDKKLDDTSFWKTVQLPSKGKLPSDLDPAQLDWILGPAIQSGGKYDLRFAGESNDDNLHAGIIIAAMGLRYKSYCSTIARTYLVDPNKAQESSYKLLTLIHNTIIKEIRDGMTAKEVYGRAVGIIKSKKPEMEKHFLKNVGWGVGLENKDPTLVLNAKNQRVLKDGMTLIINTGFQDIENPHPQDKNSKVYALVLTDTIRVTSSEPVVFTAEAPTSADANSFFFKDDEETEPAPKKEKKDSRVGAVATKNITTTRLRSERTTQVANDDIEKKRREHQKELAAKKQREGLARFSESTNDQNGGEVKKFKRFESYKRDNQFPVKIKNLEVVVDSKNSTVVLPIMGRPVPFHINTIKNASKSDEGEWSFLRINFLSPGQGVGRKDDQPFEDASAHFVRSLTFRSSDGERYNEIATQISNMKRDVVKKEQEKKDMEDVVEQDKLVEIRNRRPAVLDNVYIRPAMEGKRVPGKVEIHQNGIRYISPLNAQHRVDVLFSNVKHLFFQPCQHELIVIIHIHLKDPIIVGNKKKTKDVQFYREATDIQFDETGNRKRKYRYGDEDEFEAEQEERRRRAELDRLFQGFAQKIAEAGRNEGIEVDMPIRELGFHGVPFRSNVFVQPTTDCLIQVVEPPFMVITIEEVEIAHLERVQFGLKNFDMVFVFKDFTRAPYHVNTIPVEFLDQVKDYLDSSDIAYTEGPLNLNWPTIMKTVTADTHQFFADGGWSFLQADSDDDGGDPSDEESAFEMDEDEFDEESESSDEGSDFGSNASDDEGSDAELDSEDEGEDWDELERKAKKRDRESAMEEEDRGANKKKQRKR</sequence>
<protein>
    <recommendedName>
        <fullName>FACT complex subunit SPT16</fullName>
    </recommendedName>
    <alternativeName>
        <fullName>Facilitates chromatin transcription complex subunit SPT16</fullName>
    </alternativeName>
</protein>
<accession>Q4HYB8</accession>
<accession>A0A0E0RVU9</accession>
<accession>V6RXH7</accession>
<keyword id="KW-0158">Chromosome</keyword>
<keyword id="KW-0175">Coiled coil</keyword>
<keyword id="KW-0227">DNA damage</keyword>
<keyword id="KW-0234">DNA repair</keyword>
<keyword id="KW-0235">DNA replication</keyword>
<keyword id="KW-0539">Nucleus</keyword>
<keyword id="KW-1185">Reference proteome</keyword>
<keyword id="KW-0804">Transcription</keyword>
<keyword id="KW-0805">Transcription regulation</keyword>
<reference key="1">
    <citation type="journal article" date="2007" name="Science">
        <title>The Fusarium graminearum genome reveals a link between localized polymorphism and pathogen specialization.</title>
        <authorList>
            <person name="Cuomo C.A."/>
            <person name="Gueldener U."/>
            <person name="Xu J.-R."/>
            <person name="Trail F."/>
            <person name="Turgeon B.G."/>
            <person name="Di Pietro A."/>
            <person name="Walton J.D."/>
            <person name="Ma L.-J."/>
            <person name="Baker S.E."/>
            <person name="Rep M."/>
            <person name="Adam G."/>
            <person name="Antoniw J."/>
            <person name="Baldwin T."/>
            <person name="Calvo S.E."/>
            <person name="Chang Y.-L."/>
            <person name="DeCaprio D."/>
            <person name="Gale L.R."/>
            <person name="Gnerre S."/>
            <person name="Goswami R.S."/>
            <person name="Hammond-Kosack K."/>
            <person name="Harris L.J."/>
            <person name="Hilburn K."/>
            <person name="Kennell J.C."/>
            <person name="Kroken S."/>
            <person name="Magnuson J.K."/>
            <person name="Mannhaupt G."/>
            <person name="Mauceli E.W."/>
            <person name="Mewes H.-W."/>
            <person name="Mitterbauer R."/>
            <person name="Muehlbauer G."/>
            <person name="Muensterkoetter M."/>
            <person name="Nelson D."/>
            <person name="O'Donnell K."/>
            <person name="Ouellet T."/>
            <person name="Qi W."/>
            <person name="Quesneville H."/>
            <person name="Roncero M.I.G."/>
            <person name="Seong K.-Y."/>
            <person name="Tetko I.V."/>
            <person name="Urban M."/>
            <person name="Waalwijk C."/>
            <person name="Ward T.J."/>
            <person name="Yao J."/>
            <person name="Birren B.W."/>
            <person name="Kistler H.C."/>
        </authorList>
    </citation>
    <scope>NUCLEOTIDE SEQUENCE [LARGE SCALE GENOMIC DNA]</scope>
    <source>
        <strain>ATCC MYA-4620 / CBS 123657 / FGSC 9075 / NRRL 31084 / PH-1</strain>
    </source>
</reference>
<reference key="2">
    <citation type="journal article" date="2010" name="Nature">
        <title>Comparative genomics reveals mobile pathogenicity chromosomes in Fusarium.</title>
        <authorList>
            <person name="Ma L.-J."/>
            <person name="van der Does H.C."/>
            <person name="Borkovich K.A."/>
            <person name="Coleman J.J."/>
            <person name="Daboussi M.-J."/>
            <person name="Di Pietro A."/>
            <person name="Dufresne M."/>
            <person name="Freitag M."/>
            <person name="Grabherr M."/>
            <person name="Henrissat B."/>
            <person name="Houterman P.M."/>
            <person name="Kang S."/>
            <person name="Shim W.-B."/>
            <person name="Woloshuk C."/>
            <person name="Xie X."/>
            <person name="Xu J.-R."/>
            <person name="Antoniw J."/>
            <person name="Baker S.E."/>
            <person name="Bluhm B.H."/>
            <person name="Breakspear A."/>
            <person name="Brown D.W."/>
            <person name="Butchko R.A.E."/>
            <person name="Chapman S."/>
            <person name="Coulson R."/>
            <person name="Coutinho P.M."/>
            <person name="Danchin E.G.J."/>
            <person name="Diener A."/>
            <person name="Gale L.R."/>
            <person name="Gardiner D.M."/>
            <person name="Goff S."/>
            <person name="Hammond-Kosack K.E."/>
            <person name="Hilburn K."/>
            <person name="Hua-Van A."/>
            <person name="Jonkers W."/>
            <person name="Kazan K."/>
            <person name="Kodira C.D."/>
            <person name="Koehrsen M."/>
            <person name="Kumar L."/>
            <person name="Lee Y.-H."/>
            <person name="Li L."/>
            <person name="Manners J.M."/>
            <person name="Miranda-Saavedra D."/>
            <person name="Mukherjee M."/>
            <person name="Park G."/>
            <person name="Park J."/>
            <person name="Park S.-Y."/>
            <person name="Proctor R.H."/>
            <person name="Regev A."/>
            <person name="Ruiz-Roldan M.C."/>
            <person name="Sain D."/>
            <person name="Sakthikumar S."/>
            <person name="Sykes S."/>
            <person name="Schwartz D.C."/>
            <person name="Turgeon B.G."/>
            <person name="Wapinski I."/>
            <person name="Yoder O."/>
            <person name="Young S."/>
            <person name="Zeng Q."/>
            <person name="Zhou S."/>
            <person name="Galagan J."/>
            <person name="Cuomo C.A."/>
            <person name="Kistler H.C."/>
            <person name="Rep M."/>
        </authorList>
    </citation>
    <scope>GENOME REANNOTATION</scope>
    <source>
        <strain>ATCC MYA-4620 / CBS 123657 / FGSC 9075 / NRRL 31084 / PH-1</strain>
    </source>
</reference>
<reference key="3">
    <citation type="journal article" date="2015" name="BMC Genomics">
        <title>The completed genome sequence of the pathogenic ascomycete fungus Fusarium graminearum.</title>
        <authorList>
            <person name="King R."/>
            <person name="Urban M."/>
            <person name="Hammond-Kosack M.C.U."/>
            <person name="Hassani-Pak K."/>
            <person name="Hammond-Kosack K.E."/>
        </authorList>
    </citation>
    <scope>NUCLEOTIDE SEQUENCE [LARGE SCALE GENOMIC DNA]</scope>
    <source>
        <strain>ATCC MYA-4620 / CBS 123657 / FGSC 9075 / NRRL 31084 / PH-1</strain>
    </source>
</reference>
<organism>
    <name type="scientific">Gibberella zeae (strain ATCC MYA-4620 / CBS 123657 / FGSC 9075 / NRRL 31084 / PH-1)</name>
    <name type="common">Wheat head blight fungus</name>
    <name type="synonym">Fusarium graminearum</name>
    <dbReference type="NCBI Taxonomy" id="229533"/>
    <lineage>
        <taxon>Eukaryota</taxon>
        <taxon>Fungi</taxon>
        <taxon>Dikarya</taxon>
        <taxon>Ascomycota</taxon>
        <taxon>Pezizomycotina</taxon>
        <taxon>Sordariomycetes</taxon>
        <taxon>Hypocreomycetidae</taxon>
        <taxon>Hypocreales</taxon>
        <taxon>Nectriaceae</taxon>
        <taxon>Fusarium</taxon>
    </lineage>
</organism>
<evidence type="ECO:0000250" key="1"/>
<evidence type="ECO:0000255" key="2"/>
<evidence type="ECO:0000256" key="3">
    <source>
        <dbReference type="SAM" id="MobiDB-lite"/>
    </source>
</evidence>
<evidence type="ECO:0000305" key="4"/>